<name>NADE_VIBCH</name>
<gene>
    <name evidence="1" type="primary">nadE</name>
    <name type="ordered locus">VC_A0207</name>
</gene>
<protein>
    <recommendedName>
        <fullName evidence="1">NH(3)-dependent NAD(+) synthetase</fullName>
        <ecNumber evidence="1">6.3.1.5</ecNumber>
    </recommendedName>
</protein>
<comment type="function">
    <text evidence="1">Catalyzes the ATP-dependent amidation of deamido-NAD to form NAD. Uses ammonia as a nitrogen source.</text>
</comment>
<comment type="catalytic activity">
    <reaction evidence="1">
        <text>deamido-NAD(+) + NH4(+) + ATP = AMP + diphosphate + NAD(+) + H(+)</text>
        <dbReference type="Rhea" id="RHEA:21188"/>
        <dbReference type="ChEBI" id="CHEBI:15378"/>
        <dbReference type="ChEBI" id="CHEBI:28938"/>
        <dbReference type="ChEBI" id="CHEBI:30616"/>
        <dbReference type="ChEBI" id="CHEBI:33019"/>
        <dbReference type="ChEBI" id="CHEBI:57540"/>
        <dbReference type="ChEBI" id="CHEBI:58437"/>
        <dbReference type="ChEBI" id="CHEBI:456215"/>
        <dbReference type="EC" id="6.3.1.5"/>
    </reaction>
</comment>
<comment type="pathway">
    <text evidence="1">Cofactor biosynthesis; NAD(+) biosynthesis; NAD(+) from deamido-NAD(+) (ammonia route): step 1/1.</text>
</comment>
<comment type="subunit">
    <text evidence="1">Homodimer.</text>
</comment>
<comment type="similarity">
    <text evidence="1">Belongs to the NAD synthetase family.</text>
</comment>
<proteinExistence type="evidence at protein level"/>
<dbReference type="EC" id="6.3.1.5" evidence="1"/>
<dbReference type="EMBL" id="AE003853">
    <property type="protein sequence ID" value="AAF96119.1"/>
    <property type="molecule type" value="Genomic_DNA"/>
</dbReference>
<dbReference type="PIR" id="H82488">
    <property type="entry name" value="H82488"/>
</dbReference>
<dbReference type="RefSeq" id="NP_232606.1">
    <property type="nucleotide sequence ID" value="NC_002506.1"/>
</dbReference>
<dbReference type="RefSeq" id="WP_000400328.1">
    <property type="nucleotide sequence ID" value="NZ_LT906615.1"/>
</dbReference>
<dbReference type="PDB" id="3Q4G">
    <property type="method" value="X-ray"/>
    <property type="resolution" value="2.40 A"/>
    <property type="chains" value="A/B=1-276"/>
</dbReference>
<dbReference type="PDBsum" id="3Q4G"/>
<dbReference type="SMR" id="Q9KMW1"/>
<dbReference type="STRING" id="243277.VC_A0207"/>
<dbReference type="DNASU" id="2612343"/>
<dbReference type="EnsemblBacteria" id="AAF96119">
    <property type="protein sequence ID" value="AAF96119"/>
    <property type="gene ID" value="VC_A0207"/>
</dbReference>
<dbReference type="KEGG" id="vch:VC_A0207"/>
<dbReference type="PATRIC" id="fig|243277.26.peg.2842"/>
<dbReference type="eggNOG" id="COG0171">
    <property type="taxonomic scope" value="Bacteria"/>
</dbReference>
<dbReference type="HOGENOM" id="CLU_059327_3_0_6"/>
<dbReference type="UniPathway" id="UPA00253">
    <property type="reaction ID" value="UER00333"/>
</dbReference>
<dbReference type="EvolutionaryTrace" id="Q9KMW1"/>
<dbReference type="Proteomes" id="UP000000584">
    <property type="component" value="Chromosome 2"/>
</dbReference>
<dbReference type="GO" id="GO:0005737">
    <property type="term" value="C:cytoplasm"/>
    <property type="evidence" value="ECO:0000318"/>
    <property type="project" value="GO_Central"/>
</dbReference>
<dbReference type="GO" id="GO:0005524">
    <property type="term" value="F:ATP binding"/>
    <property type="evidence" value="ECO:0007669"/>
    <property type="project" value="UniProtKB-UniRule"/>
</dbReference>
<dbReference type="GO" id="GO:0004359">
    <property type="term" value="F:glutaminase activity"/>
    <property type="evidence" value="ECO:0007669"/>
    <property type="project" value="InterPro"/>
</dbReference>
<dbReference type="GO" id="GO:0046872">
    <property type="term" value="F:metal ion binding"/>
    <property type="evidence" value="ECO:0007669"/>
    <property type="project" value="UniProtKB-KW"/>
</dbReference>
<dbReference type="GO" id="GO:0003952">
    <property type="term" value="F:NAD+ synthase (glutamine-hydrolyzing) activity"/>
    <property type="evidence" value="ECO:0007669"/>
    <property type="project" value="InterPro"/>
</dbReference>
<dbReference type="GO" id="GO:0008795">
    <property type="term" value="F:NAD+ synthase activity"/>
    <property type="evidence" value="ECO:0007669"/>
    <property type="project" value="UniProtKB-UniRule"/>
</dbReference>
<dbReference type="GO" id="GO:0009435">
    <property type="term" value="P:NAD biosynthetic process"/>
    <property type="evidence" value="ECO:0000318"/>
    <property type="project" value="GO_Central"/>
</dbReference>
<dbReference type="CDD" id="cd00553">
    <property type="entry name" value="NAD_synthase"/>
    <property type="match status" value="1"/>
</dbReference>
<dbReference type="FunFam" id="3.40.50.620:FF:000015">
    <property type="entry name" value="NH(3)-dependent NAD(+) synthetase"/>
    <property type="match status" value="1"/>
</dbReference>
<dbReference type="Gene3D" id="3.40.50.620">
    <property type="entry name" value="HUPs"/>
    <property type="match status" value="1"/>
</dbReference>
<dbReference type="HAMAP" id="MF_00193">
    <property type="entry name" value="NadE_ammonia_dep"/>
    <property type="match status" value="1"/>
</dbReference>
<dbReference type="InterPro" id="IPR022310">
    <property type="entry name" value="NAD/GMP_synthase"/>
</dbReference>
<dbReference type="InterPro" id="IPR003694">
    <property type="entry name" value="NAD_synthase"/>
</dbReference>
<dbReference type="InterPro" id="IPR022926">
    <property type="entry name" value="NH(3)-dep_NAD(+)_synth"/>
</dbReference>
<dbReference type="InterPro" id="IPR014729">
    <property type="entry name" value="Rossmann-like_a/b/a_fold"/>
</dbReference>
<dbReference type="NCBIfam" id="TIGR00552">
    <property type="entry name" value="nadE"/>
    <property type="match status" value="1"/>
</dbReference>
<dbReference type="NCBIfam" id="NF001979">
    <property type="entry name" value="PRK00768.1"/>
    <property type="match status" value="1"/>
</dbReference>
<dbReference type="PANTHER" id="PTHR23090">
    <property type="entry name" value="NH 3 /GLUTAMINE-DEPENDENT NAD + SYNTHETASE"/>
    <property type="match status" value="1"/>
</dbReference>
<dbReference type="PANTHER" id="PTHR23090:SF7">
    <property type="entry name" value="NH(3)-DEPENDENT NAD(+) SYNTHETASE"/>
    <property type="match status" value="1"/>
</dbReference>
<dbReference type="Pfam" id="PF02540">
    <property type="entry name" value="NAD_synthase"/>
    <property type="match status" value="1"/>
</dbReference>
<dbReference type="SUPFAM" id="SSF52402">
    <property type="entry name" value="Adenine nucleotide alpha hydrolases-like"/>
    <property type="match status" value="1"/>
</dbReference>
<keyword id="KW-0002">3D-structure</keyword>
<keyword id="KW-0067">ATP-binding</keyword>
<keyword id="KW-0436">Ligase</keyword>
<keyword id="KW-0460">Magnesium</keyword>
<keyword id="KW-0479">Metal-binding</keyword>
<keyword id="KW-0520">NAD</keyword>
<keyword id="KW-0547">Nucleotide-binding</keyword>
<keyword id="KW-1185">Reference proteome</keyword>
<feature type="chain" id="PRO_0000152215" description="NH(3)-dependent NAD(+) synthetase">
    <location>
        <begin position="1"/>
        <end position="276"/>
    </location>
</feature>
<feature type="binding site" evidence="1">
    <location>
        <begin position="43"/>
        <end position="50"/>
    </location>
    <ligand>
        <name>ATP</name>
        <dbReference type="ChEBI" id="CHEBI:30616"/>
    </ligand>
</feature>
<feature type="binding site" evidence="1">
    <location>
        <position position="49"/>
    </location>
    <ligand>
        <name>Mg(2+)</name>
        <dbReference type="ChEBI" id="CHEBI:18420"/>
    </ligand>
</feature>
<feature type="binding site" evidence="1">
    <location>
        <position position="146"/>
    </location>
    <ligand>
        <name>deamido-NAD(+)</name>
        <dbReference type="ChEBI" id="CHEBI:58437"/>
    </ligand>
</feature>
<feature type="binding site" evidence="1">
    <location>
        <position position="166"/>
    </location>
    <ligand>
        <name>ATP</name>
        <dbReference type="ChEBI" id="CHEBI:30616"/>
    </ligand>
</feature>
<feature type="binding site" evidence="1">
    <location>
        <position position="171"/>
    </location>
    <ligand>
        <name>Mg(2+)</name>
        <dbReference type="ChEBI" id="CHEBI:18420"/>
    </ligand>
</feature>
<feature type="binding site" evidence="1">
    <location>
        <position position="179"/>
    </location>
    <ligand>
        <name>deamido-NAD(+)</name>
        <dbReference type="ChEBI" id="CHEBI:58437"/>
    </ligand>
</feature>
<feature type="binding site" evidence="1">
    <location>
        <position position="186"/>
    </location>
    <ligand>
        <name>deamido-NAD(+)</name>
        <dbReference type="ChEBI" id="CHEBI:58437"/>
    </ligand>
</feature>
<feature type="binding site" evidence="1">
    <location>
        <position position="195"/>
    </location>
    <ligand>
        <name>ATP</name>
        <dbReference type="ChEBI" id="CHEBI:30616"/>
    </ligand>
</feature>
<feature type="binding site" evidence="1">
    <location>
        <position position="217"/>
    </location>
    <ligand>
        <name>ATP</name>
        <dbReference type="ChEBI" id="CHEBI:30616"/>
    </ligand>
</feature>
<feature type="binding site" evidence="1">
    <location>
        <begin position="266"/>
        <end position="267"/>
    </location>
    <ligand>
        <name>deamido-NAD(+)</name>
        <dbReference type="ChEBI" id="CHEBI:58437"/>
    </ligand>
</feature>
<feature type="helix" evidence="3">
    <location>
        <begin position="1"/>
        <end position="9"/>
    </location>
</feature>
<feature type="helix" evidence="3">
    <location>
        <begin position="17"/>
        <end position="35"/>
    </location>
</feature>
<feature type="strand" evidence="3">
    <location>
        <begin position="39"/>
        <end position="43"/>
    </location>
</feature>
<feature type="helix" evidence="3">
    <location>
        <begin position="48"/>
        <end position="67"/>
    </location>
</feature>
<feature type="strand" evidence="3">
    <location>
        <begin position="74"/>
        <end position="79"/>
    </location>
</feature>
<feature type="strand" evidence="3">
    <location>
        <begin position="82"/>
        <end position="84"/>
    </location>
</feature>
<feature type="helix" evidence="3">
    <location>
        <begin position="88"/>
        <end position="98"/>
    </location>
</feature>
<feature type="strand" evidence="3">
    <location>
        <begin position="101"/>
        <end position="105"/>
    </location>
</feature>
<feature type="helix" evidence="3">
    <location>
        <begin position="109"/>
        <end position="126"/>
    </location>
</feature>
<feature type="helix" evidence="3">
    <location>
        <begin position="136"/>
        <end position="159"/>
    </location>
</feature>
<feature type="strand" evidence="3">
    <location>
        <begin position="161"/>
        <end position="164"/>
    </location>
</feature>
<feature type="helix" evidence="3">
    <location>
        <begin position="169"/>
        <end position="174"/>
    </location>
</feature>
<feature type="turn" evidence="3">
    <location>
        <begin position="179"/>
        <end position="183"/>
    </location>
</feature>
<feature type="turn" evidence="3">
    <location>
        <begin position="189"/>
        <end position="192"/>
    </location>
</feature>
<feature type="helix" evidence="3">
    <location>
        <begin position="195"/>
        <end position="204"/>
    </location>
</feature>
<feature type="helix" evidence="3">
    <location>
        <begin position="209"/>
        <end position="212"/>
    </location>
</feature>
<feature type="helix" evidence="3">
    <location>
        <begin position="237"/>
        <end position="245"/>
    </location>
</feature>
<feature type="helix" evidence="3">
    <location>
        <begin position="251"/>
        <end position="263"/>
    </location>
</feature>
<feature type="helix" evidence="3">
    <location>
        <begin position="265"/>
        <end position="268"/>
    </location>
</feature>
<organism>
    <name type="scientific">Vibrio cholerae serotype O1 (strain ATCC 39315 / El Tor Inaba N16961)</name>
    <dbReference type="NCBI Taxonomy" id="243277"/>
    <lineage>
        <taxon>Bacteria</taxon>
        <taxon>Pseudomonadati</taxon>
        <taxon>Pseudomonadota</taxon>
        <taxon>Gammaproteobacteria</taxon>
        <taxon>Vibrionales</taxon>
        <taxon>Vibrionaceae</taxon>
        <taxon>Vibrio</taxon>
    </lineage>
</organism>
<accession>Q9KMW1</accession>
<reference key="1">
    <citation type="journal article" date="2000" name="Nature">
        <title>DNA sequence of both chromosomes of the cholera pathogen Vibrio cholerae.</title>
        <authorList>
            <person name="Heidelberg J.F."/>
            <person name="Eisen J.A."/>
            <person name="Nelson W.C."/>
            <person name="Clayton R.A."/>
            <person name="Gwinn M.L."/>
            <person name="Dodson R.J."/>
            <person name="Haft D.H."/>
            <person name="Hickey E.K."/>
            <person name="Peterson J.D."/>
            <person name="Umayam L.A."/>
            <person name="Gill S.R."/>
            <person name="Nelson K.E."/>
            <person name="Read T.D."/>
            <person name="Tettelin H."/>
            <person name="Richardson D.L."/>
            <person name="Ermolaeva M.D."/>
            <person name="Vamathevan J.J."/>
            <person name="Bass S."/>
            <person name="Qin H."/>
            <person name="Dragoi I."/>
            <person name="Sellers P."/>
            <person name="McDonald L.A."/>
            <person name="Utterback T.R."/>
            <person name="Fleischmann R.D."/>
            <person name="Nierman W.C."/>
            <person name="White O."/>
            <person name="Salzberg S.L."/>
            <person name="Smith H.O."/>
            <person name="Colwell R.R."/>
            <person name="Mekalanos J.J."/>
            <person name="Venter J.C."/>
            <person name="Fraser C.M."/>
        </authorList>
    </citation>
    <scope>NUCLEOTIDE SEQUENCE [LARGE SCALE GENOMIC DNA]</scope>
    <source>
        <strain>ATCC 39315 / El Tor Inaba N16961</strain>
    </source>
</reference>
<reference evidence="2" key="2">
    <citation type="submission" date="2010-12" db="PDB data bank">
        <title>Structure of NAD synthetase from Vibrio cholerae.</title>
        <authorList>
            <person name="Anderson S.M."/>
            <person name="Wawrzak Z."/>
            <person name="Onopriyenko O."/>
            <person name="Peterson S.N."/>
            <person name="Anderson W.F."/>
            <person name="Savchenko A."/>
        </authorList>
    </citation>
    <scope>X-RAY CRYSTALLOGRAPHY (2.40 ANGSTROMS)</scope>
    <source>
        <strain>ATCC 39315 / El Tor Inaba N16961</strain>
    </source>
</reference>
<evidence type="ECO:0000255" key="1">
    <source>
        <dbReference type="HAMAP-Rule" id="MF_00193"/>
    </source>
</evidence>
<evidence type="ECO:0007744" key="2">
    <source>
        <dbReference type="PDB" id="3Q4G"/>
    </source>
</evidence>
<evidence type="ECO:0007829" key="3">
    <source>
        <dbReference type="PDB" id="3Q4G"/>
    </source>
</evidence>
<sequence>MEHKIREEMRVLPSIDPQFEIERRVAFIKRKLTEARCKSLVLGISGGVDSTTCGRLAQLAVEELNQQHNTTEYQFIAVRLPYGEQKDEDEAQLALSFIRPTHSVSVNIKAGVDGLHAASHHALANTGLIPSDPAKVDFIKGNVKARARMVAQYEIAGYVGGLVLGTDHSAENITGFYTKFGDGACDLAPLFGLNKRQVRLLAKTLGAPEQLVYKTPTADLEELAPQKADEAALNLTYEQIDDFLEGKAVPAEVSQRLVAIYHATQHKRQPIPTIYD</sequence>